<keyword id="KW-0450">Lipoyl</keyword>
<keyword id="KW-1185">Reference proteome</keyword>
<reference key="1">
    <citation type="submission" date="2007-11" db="EMBL/GenBank/DDBJ databases">
        <title>Complete genome sequence of Clostridium phytofermentans ISDg.</title>
        <authorList>
            <person name="Leschine S.B."/>
            <person name="Warnick T.A."/>
            <person name="Blanchard J.L."/>
            <person name="Schnell D.J."/>
            <person name="Petit E.L."/>
            <person name="LaTouf W.G."/>
            <person name="Copeland A."/>
            <person name="Lucas S."/>
            <person name="Lapidus A."/>
            <person name="Barry K."/>
            <person name="Glavina del Rio T."/>
            <person name="Dalin E."/>
            <person name="Tice H."/>
            <person name="Pitluck S."/>
            <person name="Kiss H."/>
            <person name="Brettin T."/>
            <person name="Bruce D."/>
            <person name="Detter J.C."/>
            <person name="Han C."/>
            <person name="Kuske C."/>
            <person name="Schmutz J."/>
            <person name="Larimer F."/>
            <person name="Land M."/>
            <person name="Hauser L."/>
            <person name="Kyrpides N."/>
            <person name="Kim E.A."/>
            <person name="Richardson P."/>
        </authorList>
    </citation>
    <scope>NUCLEOTIDE SEQUENCE [LARGE SCALE GENOMIC DNA]</scope>
    <source>
        <strain>ATCC 700394 / DSM 18823 / ISDg</strain>
    </source>
</reference>
<comment type="function">
    <text evidence="1">The glycine cleavage system catalyzes the degradation of glycine. The H protein shuttles the methylamine group of glycine from the P protein to the T protein.</text>
</comment>
<comment type="cofactor">
    <cofactor evidence="1">
        <name>(R)-lipoate</name>
        <dbReference type="ChEBI" id="CHEBI:83088"/>
    </cofactor>
    <text evidence="1">Binds 1 lipoyl cofactor covalently.</text>
</comment>
<comment type="subunit">
    <text evidence="1">The glycine cleavage system is composed of four proteins: P, T, L and H.</text>
</comment>
<comment type="similarity">
    <text evidence="1">Belongs to the GcvH family.</text>
</comment>
<protein>
    <recommendedName>
        <fullName evidence="1">Glycine cleavage system H protein</fullName>
    </recommendedName>
</protein>
<gene>
    <name evidence="1" type="primary">gcvH</name>
    <name type="ordered locus">Cphy_1539</name>
</gene>
<name>GCSH_LACP7</name>
<accession>A9KQK0</accession>
<organism>
    <name type="scientific">Lachnoclostridium phytofermentans (strain ATCC 700394 / DSM 18823 / ISDg)</name>
    <name type="common">Clostridium phytofermentans</name>
    <dbReference type="NCBI Taxonomy" id="357809"/>
    <lineage>
        <taxon>Bacteria</taxon>
        <taxon>Bacillati</taxon>
        <taxon>Bacillota</taxon>
        <taxon>Clostridia</taxon>
        <taxon>Lachnospirales</taxon>
        <taxon>Lachnospiraceae</taxon>
    </lineage>
</organism>
<proteinExistence type="inferred from homology"/>
<sequence>MKVLENLVYTKTHEWVRFEDETTALVGLTDYAQQTLGQLVFVNLPQEGDETVTGESFADVESVKAVSDVYCPVTGVVSEINEELLDAPEKINDTPYEAWFAKITDITEKEEFLSPEEYEEFVKKEME</sequence>
<dbReference type="EMBL" id="CP000885">
    <property type="protein sequence ID" value="ABX41913.1"/>
    <property type="molecule type" value="Genomic_DNA"/>
</dbReference>
<dbReference type="RefSeq" id="WP_012199567.1">
    <property type="nucleotide sequence ID" value="NC_010001.1"/>
</dbReference>
<dbReference type="SMR" id="A9KQK0"/>
<dbReference type="STRING" id="357809.Cphy_1539"/>
<dbReference type="KEGG" id="cpy:Cphy_1539"/>
<dbReference type="eggNOG" id="COG0509">
    <property type="taxonomic scope" value="Bacteria"/>
</dbReference>
<dbReference type="HOGENOM" id="CLU_097408_2_1_9"/>
<dbReference type="OrthoDB" id="9796712at2"/>
<dbReference type="Proteomes" id="UP000000370">
    <property type="component" value="Chromosome"/>
</dbReference>
<dbReference type="GO" id="GO:0005829">
    <property type="term" value="C:cytosol"/>
    <property type="evidence" value="ECO:0007669"/>
    <property type="project" value="TreeGrafter"/>
</dbReference>
<dbReference type="GO" id="GO:0005960">
    <property type="term" value="C:glycine cleavage complex"/>
    <property type="evidence" value="ECO:0007669"/>
    <property type="project" value="InterPro"/>
</dbReference>
<dbReference type="GO" id="GO:0019464">
    <property type="term" value="P:glycine decarboxylation via glycine cleavage system"/>
    <property type="evidence" value="ECO:0007669"/>
    <property type="project" value="UniProtKB-UniRule"/>
</dbReference>
<dbReference type="CDD" id="cd06848">
    <property type="entry name" value="GCS_H"/>
    <property type="match status" value="1"/>
</dbReference>
<dbReference type="Gene3D" id="2.40.50.100">
    <property type="match status" value="1"/>
</dbReference>
<dbReference type="HAMAP" id="MF_00272">
    <property type="entry name" value="GcvH"/>
    <property type="match status" value="1"/>
</dbReference>
<dbReference type="InterPro" id="IPR000089">
    <property type="entry name" value="Biotin_lipoyl"/>
</dbReference>
<dbReference type="InterPro" id="IPR002930">
    <property type="entry name" value="GCV_H"/>
</dbReference>
<dbReference type="InterPro" id="IPR033753">
    <property type="entry name" value="GCV_H/Fam206"/>
</dbReference>
<dbReference type="InterPro" id="IPR017453">
    <property type="entry name" value="GCV_H_sub"/>
</dbReference>
<dbReference type="InterPro" id="IPR011053">
    <property type="entry name" value="Single_hybrid_motif"/>
</dbReference>
<dbReference type="NCBIfam" id="TIGR00527">
    <property type="entry name" value="gcvH"/>
    <property type="match status" value="1"/>
</dbReference>
<dbReference type="NCBIfam" id="NF002270">
    <property type="entry name" value="PRK01202.1"/>
    <property type="match status" value="1"/>
</dbReference>
<dbReference type="PANTHER" id="PTHR11715">
    <property type="entry name" value="GLYCINE CLEAVAGE SYSTEM H PROTEIN"/>
    <property type="match status" value="1"/>
</dbReference>
<dbReference type="PANTHER" id="PTHR11715:SF3">
    <property type="entry name" value="GLYCINE CLEAVAGE SYSTEM H PROTEIN-RELATED"/>
    <property type="match status" value="1"/>
</dbReference>
<dbReference type="Pfam" id="PF01597">
    <property type="entry name" value="GCV_H"/>
    <property type="match status" value="1"/>
</dbReference>
<dbReference type="SUPFAM" id="SSF51230">
    <property type="entry name" value="Single hybrid motif"/>
    <property type="match status" value="1"/>
</dbReference>
<dbReference type="PROSITE" id="PS50968">
    <property type="entry name" value="BIOTINYL_LIPOYL"/>
    <property type="match status" value="1"/>
</dbReference>
<evidence type="ECO:0000255" key="1">
    <source>
        <dbReference type="HAMAP-Rule" id="MF_00272"/>
    </source>
</evidence>
<evidence type="ECO:0000255" key="2">
    <source>
        <dbReference type="PROSITE-ProRule" id="PRU01066"/>
    </source>
</evidence>
<feature type="chain" id="PRO_1000078727" description="Glycine cleavage system H protein">
    <location>
        <begin position="1"/>
        <end position="127"/>
    </location>
</feature>
<feature type="domain" description="Lipoyl-binding" evidence="2">
    <location>
        <begin position="23"/>
        <end position="104"/>
    </location>
</feature>
<feature type="modified residue" description="N6-lipoyllysine" evidence="1">
    <location>
        <position position="64"/>
    </location>
</feature>